<dbReference type="EMBL" id="CP000653">
    <property type="protein sequence ID" value="ABP61632.1"/>
    <property type="molecule type" value="Genomic_DNA"/>
</dbReference>
<dbReference type="RefSeq" id="WP_015959964.1">
    <property type="nucleotide sequence ID" value="NC_009436.1"/>
</dbReference>
<dbReference type="SMR" id="A4WD52"/>
<dbReference type="STRING" id="399742.Ent638_2968"/>
<dbReference type="KEGG" id="ent:Ent638_2968"/>
<dbReference type="eggNOG" id="ENOG5032YJI">
    <property type="taxonomic scope" value="Bacteria"/>
</dbReference>
<dbReference type="HOGENOM" id="CLU_198936_0_0_6"/>
<dbReference type="Proteomes" id="UP000000230">
    <property type="component" value="Chromosome"/>
</dbReference>
<dbReference type="GO" id="GO:0005886">
    <property type="term" value="C:plasma membrane"/>
    <property type="evidence" value="ECO:0007669"/>
    <property type="project" value="UniProtKB-SubCell"/>
</dbReference>
<dbReference type="HAMAP" id="MF_01566">
    <property type="entry name" value="UPF0370"/>
    <property type="match status" value="1"/>
</dbReference>
<dbReference type="InterPro" id="IPR020910">
    <property type="entry name" value="UPF0370"/>
</dbReference>
<dbReference type="NCBIfam" id="NF010185">
    <property type="entry name" value="PRK13664.1"/>
    <property type="match status" value="1"/>
</dbReference>
<dbReference type="Pfam" id="PF13980">
    <property type="entry name" value="UPF0370"/>
    <property type="match status" value="1"/>
</dbReference>
<comment type="subcellular location">
    <subcellularLocation>
        <location evidence="1">Cell membrane</location>
        <topology evidence="1">Single-pass membrane protein</topology>
    </subcellularLocation>
</comment>
<comment type="similarity">
    <text evidence="1">Belongs to the UPF0370 family.</text>
</comment>
<protein>
    <recommendedName>
        <fullName evidence="1">UPF0370 protein Ent638_2968</fullName>
    </recommendedName>
</protein>
<sequence>MDWLSKYWWILVLVFLVGVLLNVIKDLKRVDHKKFLANKPELPPHRDFNDKWDDDDNWPKKDQKK</sequence>
<accession>A4WD52</accession>
<gene>
    <name type="ordered locus">Ent638_2968</name>
</gene>
<feature type="chain" id="PRO_1000069084" description="UPF0370 protein Ent638_2968">
    <location>
        <begin position="1"/>
        <end position="65"/>
    </location>
</feature>
<feature type="transmembrane region" description="Helical" evidence="1">
    <location>
        <begin position="4"/>
        <end position="24"/>
    </location>
</feature>
<feature type="region of interest" description="Disordered" evidence="2">
    <location>
        <begin position="39"/>
        <end position="65"/>
    </location>
</feature>
<feature type="compositionally biased region" description="Basic and acidic residues" evidence="2">
    <location>
        <begin position="42"/>
        <end position="65"/>
    </location>
</feature>
<reference key="1">
    <citation type="journal article" date="2010" name="PLoS Genet.">
        <title>Genome sequence of the plant growth promoting endophytic bacterium Enterobacter sp. 638.</title>
        <authorList>
            <person name="Taghavi S."/>
            <person name="van der Lelie D."/>
            <person name="Hoffman A."/>
            <person name="Zhang Y.B."/>
            <person name="Walla M.D."/>
            <person name="Vangronsveld J."/>
            <person name="Newman L."/>
            <person name="Monchy S."/>
        </authorList>
    </citation>
    <scope>NUCLEOTIDE SEQUENCE [LARGE SCALE GENOMIC DNA]</scope>
    <source>
        <strain>638</strain>
    </source>
</reference>
<organism>
    <name type="scientific">Enterobacter sp. (strain 638)</name>
    <dbReference type="NCBI Taxonomy" id="399742"/>
    <lineage>
        <taxon>Bacteria</taxon>
        <taxon>Pseudomonadati</taxon>
        <taxon>Pseudomonadota</taxon>
        <taxon>Gammaproteobacteria</taxon>
        <taxon>Enterobacterales</taxon>
        <taxon>Enterobacteriaceae</taxon>
        <taxon>Enterobacter</taxon>
    </lineage>
</organism>
<proteinExistence type="inferred from homology"/>
<evidence type="ECO:0000255" key="1">
    <source>
        <dbReference type="HAMAP-Rule" id="MF_01566"/>
    </source>
</evidence>
<evidence type="ECO:0000256" key="2">
    <source>
        <dbReference type="SAM" id="MobiDB-lite"/>
    </source>
</evidence>
<keyword id="KW-1003">Cell membrane</keyword>
<keyword id="KW-0472">Membrane</keyword>
<keyword id="KW-0812">Transmembrane</keyword>
<keyword id="KW-1133">Transmembrane helix</keyword>
<name>Y2968_ENT38</name>